<comment type="function">
    <text evidence="1">Catalyzes the hydrolysis of glutamine to glutamate and ammonia as part of the biosynthesis of pyridoxal 5'-phosphate. The resulting ammonia molecule is channeled to the active site of PdxS.</text>
</comment>
<comment type="catalytic activity">
    <reaction evidence="1">
        <text>aldehydo-D-ribose 5-phosphate + D-glyceraldehyde 3-phosphate + L-glutamine = pyridoxal 5'-phosphate + L-glutamate + phosphate + 3 H2O + H(+)</text>
        <dbReference type="Rhea" id="RHEA:31507"/>
        <dbReference type="ChEBI" id="CHEBI:15377"/>
        <dbReference type="ChEBI" id="CHEBI:15378"/>
        <dbReference type="ChEBI" id="CHEBI:29985"/>
        <dbReference type="ChEBI" id="CHEBI:43474"/>
        <dbReference type="ChEBI" id="CHEBI:58273"/>
        <dbReference type="ChEBI" id="CHEBI:58359"/>
        <dbReference type="ChEBI" id="CHEBI:59776"/>
        <dbReference type="ChEBI" id="CHEBI:597326"/>
        <dbReference type="EC" id="4.3.3.6"/>
    </reaction>
</comment>
<comment type="catalytic activity">
    <reaction evidence="1">
        <text>L-glutamine + H2O = L-glutamate + NH4(+)</text>
        <dbReference type="Rhea" id="RHEA:15889"/>
        <dbReference type="ChEBI" id="CHEBI:15377"/>
        <dbReference type="ChEBI" id="CHEBI:28938"/>
        <dbReference type="ChEBI" id="CHEBI:29985"/>
        <dbReference type="ChEBI" id="CHEBI:58359"/>
        <dbReference type="EC" id="3.5.1.2"/>
    </reaction>
</comment>
<comment type="pathway">
    <text evidence="1">Cofactor biosynthesis; pyridoxal 5'-phosphate biosynthesis.</text>
</comment>
<comment type="subunit">
    <text evidence="1">In the presence of PdxS, forms a dodecamer of heterodimers. Only shows activity in the heterodimer.</text>
</comment>
<comment type="similarity">
    <text evidence="1">Belongs to the glutaminase PdxT/SNO family.</text>
</comment>
<reference key="1">
    <citation type="journal article" date="2007" name="Proc. Natl. Acad. Sci. U.S.A.">
        <title>Genome sequencing reveals complex secondary metabolome in the marine actinomycete Salinispora tropica.</title>
        <authorList>
            <person name="Udwary D.W."/>
            <person name="Zeigler L."/>
            <person name="Asolkar R.N."/>
            <person name="Singan V."/>
            <person name="Lapidus A."/>
            <person name="Fenical W."/>
            <person name="Jensen P.R."/>
            <person name="Moore B.S."/>
        </authorList>
    </citation>
    <scope>NUCLEOTIDE SEQUENCE [LARGE SCALE GENOMIC DNA]</scope>
    <source>
        <strain>ATCC BAA-916 / DSM 44818 / JCM 13857 / NBRC 105044 / CNB-440</strain>
    </source>
</reference>
<accession>A4X5V4</accession>
<name>PDXT_SALTO</name>
<dbReference type="EC" id="4.3.3.6" evidence="1"/>
<dbReference type="EC" id="3.5.1.2" evidence="1"/>
<dbReference type="EMBL" id="CP000667">
    <property type="protein sequence ID" value="ABP54254.1"/>
    <property type="molecule type" value="Genomic_DNA"/>
</dbReference>
<dbReference type="RefSeq" id="WP_011905685.1">
    <property type="nucleotide sequence ID" value="NC_009380.1"/>
</dbReference>
<dbReference type="SMR" id="A4X5V4"/>
<dbReference type="STRING" id="369723.Strop_1791"/>
<dbReference type="MEROPS" id="C26.A32"/>
<dbReference type="KEGG" id="stp:Strop_1791"/>
<dbReference type="PATRIC" id="fig|369723.5.peg.1838"/>
<dbReference type="eggNOG" id="COG0311">
    <property type="taxonomic scope" value="Bacteria"/>
</dbReference>
<dbReference type="HOGENOM" id="CLU_069674_2_0_11"/>
<dbReference type="UniPathway" id="UPA00245"/>
<dbReference type="Proteomes" id="UP000000235">
    <property type="component" value="Chromosome"/>
</dbReference>
<dbReference type="GO" id="GO:0005829">
    <property type="term" value="C:cytosol"/>
    <property type="evidence" value="ECO:0007669"/>
    <property type="project" value="TreeGrafter"/>
</dbReference>
<dbReference type="GO" id="GO:1903600">
    <property type="term" value="C:glutaminase complex"/>
    <property type="evidence" value="ECO:0007669"/>
    <property type="project" value="TreeGrafter"/>
</dbReference>
<dbReference type="GO" id="GO:0004359">
    <property type="term" value="F:glutaminase activity"/>
    <property type="evidence" value="ECO:0007669"/>
    <property type="project" value="UniProtKB-UniRule"/>
</dbReference>
<dbReference type="GO" id="GO:0036381">
    <property type="term" value="F:pyridoxal 5'-phosphate synthase (glutamine hydrolysing) activity"/>
    <property type="evidence" value="ECO:0007669"/>
    <property type="project" value="UniProtKB-UniRule"/>
</dbReference>
<dbReference type="GO" id="GO:0006543">
    <property type="term" value="P:glutamine catabolic process"/>
    <property type="evidence" value="ECO:0007669"/>
    <property type="project" value="UniProtKB-UniRule"/>
</dbReference>
<dbReference type="GO" id="GO:0042823">
    <property type="term" value="P:pyridoxal phosphate biosynthetic process"/>
    <property type="evidence" value="ECO:0007669"/>
    <property type="project" value="UniProtKB-UniRule"/>
</dbReference>
<dbReference type="GO" id="GO:0008614">
    <property type="term" value="P:pyridoxine metabolic process"/>
    <property type="evidence" value="ECO:0007669"/>
    <property type="project" value="TreeGrafter"/>
</dbReference>
<dbReference type="CDD" id="cd01749">
    <property type="entry name" value="GATase1_PB"/>
    <property type="match status" value="1"/>
</dbReference>
<dbReference type="FunFam" id="3.40.50.880:FF:000010">
    <property type="entry name" value="uncharacterized protein LOC100176842 isoform X2"/>
    <property type="match status" value="1"/>
</dbReference>
<dbReference type="Gene3D" id="3.40.50.880">
    <property type="match status" value="1"/>
</dbReference>
<dbReference type="HAMAP" id="MF_01615">
    <property type="entry name" value="PdxT"/>
    <property type="match status" value="1"/>
</dbReference>
<dbReference type="InterPro" id="IPR029062">
    <property type="entry name" value="Class_I_gatase-like"/>
</dbReference>
<dbReference type="InterPro" id="IPR002161">
    <property type="entry name" value="PdxT/SNO"/>
</dbReference>
<dbReference type="InterPro" id="IPR021196">
    <property type="entry name" value="PdxT/SNO_CS"/>
</dbReference>
<dbReference type="NCBIfam" id="TIGR03800">
    <property type="entry name" value="PLP_synth_Pdx2"/>
    <property type="match status" value="1"/>
</dbReference>
<dbReference type="PANTHER" id="PTHR31559">
    <property type="entry name" value="PYRIDOXAL 5'-PHOSPHATE SYNTHASE SUBUNIT SNO"/>
    <property type="match status" value="1"/>
</dbReference>
<dbReference type="PANTHER" id="PTHR31559:SF0">
    <property type="entry name" value="PYRIDOXAL 5'-PHOSPHATE SYNTHASE SUBUNIT SNO1-RELATED"/>
    <property type="match status" value="1"/>
</dbReference>
<dbReference type="Pfam" id="PF01174">
    <property type="entry name" value="SNO"/>
    <property type="match status" value="1"/>
</dbReference>
<dbReference type="PIRSF" id="PIRSF005639">
    <property type="entry name" value="Glut_amidoT_SNO"/>
    <property type="match status" value="1"/>
</dbReference>
<dbReference type="SUPFAM" id="SSF52317">
    <property type="entry name" value="Class I glutamine amidotransferase-like"/>
    <property type="match status" value="1"/>
</dbReference>
<dbReference type="PROSITE" id="PS01236">
    <property type="entry name" value="PDXT_SNO_1"/>
    <property type="match status" value="1"/>
</dbReference>
<dbReference type="PROSITE" id="PS51130">
    <property type="entry name" value="PDXT_SNO_2"/>
    <property type="match status" value="1"/>
</dbReference>
<organism>
    <name type="scientific">Salinispora tropica (strain ATCC BAA-916 / DSM 44818 / JCM 13857 / NBRC 105044 / CNB-440)</name>
    <dbReference type="NCBI Taxonomy" id="369723"/>
    <lineage>
        <taxon>Bacteria</taxon>
        <taxon>Bacillati</taxon>
        <taxon>Actinomycetota</taxon>
        <taxon>Actinomycetes</taxon>
        <taxon>Micromonosporales</taxon>
        <taxon>Micromonosporaceae</taxon>
        <taxon>Salinispora</taxon>
    </lineage>
</organism>
<proteinExistence type="inferred from homology"/>
<protein>
    <recommendedName>
        <fullName evidence="1">Pyridoxal 5'-phosphate synthase subunit PdxT</fullName>
        <ecNumber evidence="1">4.3.3.6</ecNumber>
    </recommendedName>
    <alternativeName>
        <fullName evidence="1">Pdx2</fullName>
    </alternativeName>
    <alternativeName>
        <fullName evidence="1">Pyridoxal 5'-phosphate synthase glutaminase subunit</fullName>
        <ecNumber evidence="1">3.5.1.2</ecNumber>
    </alternativeName>
</protein>
<keyword id="KW-0315">Glutamine amidotransferase</keyword>
<keyword id="KW-0378">Hydrolase</keyword>
<keyword id="KW-0456">Lyase</keyword>
<keyword id="KW-0663">Pyridoxal phosphate</keyword>
<keyword id="KW-1185">Reference proteome</keyword>
<feature type="chain" id="PRO_1000088056" description="Pyridoxal 5'-phosphate synthase subunit PdxT">
    <location>
        <begin position="1"/>
        <end position="201"/>
    </location>
</feature>
<feature type="active site" description="Nucleophile" evidence="1">
    <location>
        <position position="81"/>
    </location>
</feature>
<feature type="active site" description="Charge relay system" evidence="1">
    <location>
        <position position="180"/>
    </location>
</feature>
<feature type="active site" description="Charge relay system" evidence="1">
    <location>
        <position position="182"/>
    </location>
</feature>
<feature type="binding site" evidence="1">
    <location>
        <begin position="49"/>
        <end position="51"/>
    </location>
    <ligand>
        <name>L-glutamine</name>
        <dbReference type="ChEBI" id="CHEBI:58359"/>
    </ligand>
</feature>
<feature type="binding site" evidence="1">
    <location>
        <position position="110"/>
    </location>
    <ligand>
        <name>L-glutamine</name>
        <dbReference type="ChEBI" id="CHEBI:58359"/>
    </ligand>
</feature>
<feature type="binding site" evidence="1">
    <location>
        <begin position="139"/>
        <end position="140"/>
    </location>
    <ligand>
        <name>L-glutamine</name>
        <dbReference type="ChEBI" id="CHEBI:58359"/>
    </ligand>
</feature>
<evidence type="ECO:0000255" key="1">
    <source>
        <dbReference type="HAMAP-Rule" id="MF_01615"/>
    </source>
</evidence>
<sequence length="201" mass="21465">MTAPVIGVLALQGDVREHTAALAAAGADARPVRRPKELETVDGLVIPGGESTTISRLVDLFELREPIDKRIADGMPVYGSCAGMIMLASEVLDGRSDQRGFAGIEMTVRRNAFGRQIASFEAPVSMAGIDGDPLHVLFIRAPWVERVGRGVEVLGTVAEGPAAGRIVAVRQGNLLATSFHPELTDDRRLHAYFADLVRAAI</sequence>
<gene>
    <name evidence="1" type="primary">pdxT</name>
    <name type="ordered locus">Strop_1791</name>
</gene>